<sequence>MSLTNEKIVEAIAEKSIMEVMELVKAIEDRFGVSAAAPVMVSGSAAAAAPVEEQTEFTVTLKEAGAKKVEVIKAVRAVTGLGLKEAKDLTEAGGILKEAVSKEEAEKVKKELEAAGATVEVK</sequence>
<evidence type="ECO:0000255" key="1">
    <source>
        <dbReference type="HAMAP-Rule" id="MF_00368"/>
    </source>
</evidence>
<evidence type="ECO:0000305" key="2"/>
<comment type="function">
    <text evidence="1">Forms part of the ribosomal stalk which helps the ribosome interact with GTP-bound translation factors. Is thus essential for accurate translation.</text>
</comment>
<comment type="subunit">
    <text evidence="1">Homodimer. Part of the ribosomal stalk of the 50S ribosomal subunit. Forms a multimeric L10(L12)X complex, where L10 forms an elongated spine to which 2 to 4 L12 dimers bind in a sequential fashion. Binds GTP-bound translation factors.</text>
</comment>
<comment type="similarity">
    <text evidence="1">Belongs to the bacterial ribosomal protein bL12 family.</text>
</comment>
<proteinExistence type="inferred from homology"/>
<protein>
    <recommendedName>
        <fullName evidence="1">Large ribosomal subunit protein bL12</fullName>
    </recommendedName>
    <alternativeName>
        <fullName evidence="2">50S ribosomal protein L7/L12</fullName>
    </alternativeName>
</protein>
<feature type="chain" id="PRO_0000157610" description="Large ribosomal subunit protein bL12">
    <location>
        <begin position="1"/>
        <end position="122"/>
    </location>
</feature>
<dbReference type="EMBL" id="AE009442">
    <property type="protein sequence ID" value="AAO29831.1"/>
    <property type="molecule type" value="Genomic_DNA"/>
</dbReference>
<dbReference type="RefSeq" id="WP_004090727.1">
    <property type="nucleotide sequence ID" value="NC_004556.1"/>
</dbReference>
<dbReference type="SMR" id="Q87A31"/>
<dbReference type="GeneID" id="93905863"/>
<dbReference type="KEGG" id="xft:PD_2002"/>
<dbReference type="HOGENOM" id="CLU_086499_3_2_6"/>
<dbReference type="Proteomes" id="UP000002516">
    <property type="component" value="Chromosome"/>
</dbReference>
<dbReference type="GO" id="GO:0022625">
    <property type="term" value="C:cytosolic large ribosomal subunit"/>
    <property type="evidence" value="ECO:0007669"/>
    <property type="project" value="TreeGrafter"/>
</dbReference>
<dbReference type="GO" id="GO:0003729">
    <property type="term" value="F:mRNA binding"/>
    <property type="evidence" value="ECO:0007669"/>
    <property type="project" value="TreeGrafter"/>
</dbReference>
<dbReference type="GO" id="GO:0003735">
    <property type="term" value="F:structural constituent of ribosome"/>
    <property type="evidence" value="ECO:0007669"/>
    <property type="project" value="InterPro"/>
</dbReference>
<dbReference type="GO" id="GO:0006412">
    <property type="term" value="P:translation"/>
    <property type="evidence" value="ECO:0007669"/>
    <property type="project" value="UniProtKB-UniRule"/>
</dbReference>
<dbReference type="CDD" id="cd00387">
    <property type="entry name" value="Ribosomal_L7_L12"/>
    <property type="match status" value="1"/>
</dbReference>
<dbReference type="FunFam" id="3.30.1390.10:FF:000001">
    <property type="entry name" value="50S ribosomal protein L7/L12"/>
    <property type="match status" value="1"/>
</dbReference>
<dbReference type="Gene3D" id="3.30.1390.10">
    <property type="match status" value="1"/>
</dbReference>
<dbReference type="Gene3D" id="1.20.5.710">
    <property type="entry name" value="Single helix bin"/>
    <property type="match status" value="1"/>
</dbReference>
<dbReference type="HAMAP" id="MF_00368">
    <property type="entry name" value="Ribosomal_bL12"/>
    <property type="match status" value="1"/>
</dbReference>
<dbReference type="InterPro" id="IPR000206">
    <property type="entry name" value="Ribosomal_bL12"/>
</dbReference>
<dbReference type="InterPro" id="IPR013823">
    <property type="entry name" value="Ribosomal_bL12_C"/>
</dbReference>
<dbReference type="InterPro" id="IPR014719">
    <property type="entry name" value="Ribosomal_bL12_C/ClpS-like"/>
</dbReference>
<dbReference type="InterPro" id="IPR008932">
    <property type="entry name" value="Ribosomal_bL12_oligo"/>
</dbReference>
<dbReference type="InterPro" id="IPR036235">
    <property type="entry name" value="Ribosomal_bL12_oligo_N_sf"/>
</dbReference>
<dbReference type="NCBIfam" id="TIGR00855">
    <property type="entry name" value="L12"/>
    <property type="match status" value="1"/>
</dbReference>
<dbReference type="PANTHER" id="PTHR45987">
    <property type="entry name" value="39S RIBOSOMAL PROTEIN L12"/>
    <property type="match status" value="1"/>
</dbReference>
<dbReference type="PANTHER" id="PTHR45987:SF4">
    <property type="entry name" value="LARGE RIBOSOMAL SUBUNIT PROTEIN BL12M"/>
    <property type="match status" value="1"/>
</dbReference>
<dbReference type="Pfam" id="PF00542">
    <property type="entry name" value="Ribosomal_L12"/>
    <property type="match status" value="1"/>
</dbReference>
<dbReference type="Pfam" id="PF16320">
    <property type="entry name" value="Ribosomal_L12_N"/>
    <property type="match status" value="1"/>
</dbReference>
<dbReference type="SUPFAM" id="SSF54736">
    <property type="entry name" value="ClpS-like"/>
    <property type="match status" value="1"/>
</dbReference>
<dbReference type="SUPFAM" id="SSF48300">
    <property type="entry name" value="Ribosomal protein L7/12, oligomerisation (N-terminal) domain"/>
    <property type="match status" value="1"/>
</dbReference>
<keyword id="KW-1185">Reference proteome</keyword>
<keyword id="KW-0687">Ribonucleoprotein</keyword>
<keyword id="KW-0689">Ribosomal protein</keyword>
<accession>Q87A31</accession>
<organism>
    <name type="scientific">Xylella fastidiosa (strain Temecula1 / ATCC 700964)</name>
    <dbReference type="NCBI Taxonomy" id="183190"/>
    <lineage>
        <taxon>Bacteria</taxon>
        <taxon>Pseudomonadati</taxon>
        <taxon>Pseudomonadota</taxon>
        <taxon>Gammaproteobacteria</taxon>
        <taxon>Lysobacterales</taxon>
        <taxon>Lysobacteraceae</taxon>
        <taxon>Xylella</taxon>
    </lineage>
</organism>
<reference key="1">
    <citation type="journal article" date="2003" name="J. Bacteriol.">
        <title>Comparative analyses of the complete genome sequences of Pierce's disease and citrus variegated chlorosis strains of Xylella fastidiosa.</title>
        <authorList>
            <person name="Van Sluys M.A."/>
            <person name="de Oliveira M.C."/>
            <person name="Monteiro-Vitorello C.B."/>
            <person name="Miyaki C.Y."/>
            <person name="Furlan L.R."/>
            <person name="Camargo L.E.A."/>
            <person name="da Silva A.C.R."/>
            <person name="Moon D.H."/>
            <person name="Takita M.A."/>
            <person name="Lemos E.G.M."/>
            <person name="Machado M.A."/>
            <person name="Ferro M.I.T."/>
            <person name="da Silva F.R."/>
            <person name="Goldman M.H.S."/>
            <person name="Goldman G.H."/>
            <person name="Lemos M.V.F."/>
            <person name="El-Dorry H."/>
            <person name="Tsai S.M."/>
            <person name="Carrer H."/>
            <person name="Carraro D.M."/>
            <person name="de Oliveira R.C."/>
            <person name="Nunes L.R."/>
            <person name="Siqueira W.J."/>
            <person name="Coutinho L.L."/>
            <person name="Kimura E.T."/>
            <person name="Ferro E.S."/>
            <person name="Harakava R."/>
            <person name="Kuramae E.E."/>
            <person name="Marino C.L."/>
            <person name="Giglioti E."/>
            <person name="Abreu I.L."/>
            <person name="Alves L.M.C."/>
            <person name="do Amaral A.M."/>
            <person name="Baia G.S."/>
            <person name="Blanco S.R."/>
            <person name="Brito M.S."/>
            <person name="Cannavan F.S."/>
            <person name="Celestino A.V."/>
            <person name="da Cunha A.F."/>
            <person name="Fenille R.C."/>
            <person name="Ferro J.A."/>
            <person name="Formighieri E.F."/>
            <person name="Kishi L.T."/>
            <person name="Leoni S.G."/>
            <person name="Oliveira A.R."/>
            <person name="Rosa V.E. Jr."/>
            <person name="Sassaki F.T."/>
            <person name="Sena J.A.D."/>
            <person name="de Souza A.A."/>
            <person name="Truffi D."/>
            <person name="Tsukumo F."/>
            <person name="Yanai G.M."/>
            <person name="Zaros L.G."/>
            <person name="Civerolo E.L."/>
            <person name="Simpson A.J.G."/>
            <person name="Almeida N.F. Jr."/>
            <person name="Setubal J.C."/>
            <person name="Kitajima J.P."/>
        </authorList>
    </citation>
    <scope>NUCLEOTIDE SEQUENCE [LARGE SCALE GENOMIC DNA]</scope>
    <source>
        <strain>Temecula1 / ATCC 700964</strain>
    </source>
</reference>
<name>RL7_XYLFT</name>
<gene>
    <name evidence="1" type="primary">rplL</name>
    <name type="ordered locus">PD_2002</name>
</gene>